<evidence type="ECO:0000255" key="1">
    <source>
        <dbReference type="HAMAP-Rule" id="MF_00240"/>
    </source>
</evidence>
<gene>
    <name evidence="1" type="primary">lolA</name>
    <name type="ordered locus">PC1_1720</name>
</gene>
<proteinExistence type="inferred from homology"/>
<name>LOLA_PECCP</name>
<accession>C6DF52</accession>
<protein>
    <recommendedName>
        <fullName evidence="1">Outer-membrane lipoprotein carrier protein</fullName>
    </recommendedName>
</protein>
<dbReference type="EMBL" id="CP001657">
    <property type="protein sequence ID" value="ACT12761.1"/>
    <property type="molecule type" value="Genomic_DNA"/>
</dbReference>
<dbReference type="RefSeq" id="WP_015839973.1">
    <property type="nucleotide sequence ID" value="NC_012917.1"/>
</dbReference>
<dbReference type="SMR" id="C6DF52"/>
<dbReference type="STRING" id="561230.PC1_1720"/>
<dbReference type="GeneID" id="67793723"/>
<dbReference type="KEGG" id="pct:PC1_1720"/>
<dbReference type="eggNOG" id="COG2834">
    <property type="taxonomic scope" value="Bacteria"/>
</dbReference>
<dbReference type="HOGENOM" id="CLU_087560_1_1_6"/>
<dbReference type="OrthoDB" id="9787361at2"/>
<dbReference type="Proteomes" id="UP000002736">
    <property type="component" value="Chromosome"/>
</dbReference>
<dbReference type="GO" id="GO:0030288">
    <property type="term" value="C:outer membrane-bounded periplasmic space"/>
    <property type="evidence" value="ECO:0007669"/>
    <property type="project" value="TreeGrafter"/>
</dbReference>
<dbReference type="GO" id="GO:0044874">
    <property type="term" value="P:lipoprotein localization to outer membrane"/>
    <property type="evidence" value="ECO:0007669"/>
    <property type="project" value="UniProtKB-UniRule"/>
</dbReference>
<dbReference type="GO" id="GO:0042953">
    <property type="term" value="P:lipoprotein transport"/>
    <property type="evidence" value="ECO:0007669"/>
    <property type="project" value="InterPro"/>
</dbReference>
<dbReference type="CDD" id="cd16325">
    <property type="entry name" value="LolA"/>
    <property type="match status" value="1"/>
</dbReference>
<dbReference type="FunFam" id="2.50.20.10:FF:000001">
    <property type="entry name" value="Outer-membrane lipoprotein carrier protein"/>
    <property type="match status" value="1"/>
</dbReference>
<dbReference type="Gene3D" id="2.50.20.10">
    <property type="entry name" value="Lipoprotein localisation LolA/LolB/LppX"/>
    <property type="match status" value="1"/>
</dbReference>
<dbReference type="HAMAP" id="MF_00240">
    <property type="entry name" value="LolA"/>
    <property type="match status" value="1"/>
</dbReference>
<dbReference type="InterPro" id="IPR029046">
    <property type="entry name" value="LolA/LolB/LppX"/>
</dbReference>
<dbReference type="InterPro" id="IPR004564">
    <property type="entry name" value="OM_lipoprot_carrier_LolA-like"/>
</dbReference>
<dbReference type="InterPro" id="IPR018323">
    <property type="entry name" value="OM_lipoprot_carrier_LolA_Pbac"/>
</dbReference>
<dbReference type="NCBIfam" id="TIGR00547">
    <property type="entry name" value="lolA"/>
    <property type="match status" value="1"/>
</dbReference>
<dbReference type="PANTHER" id="PTHR35869">
    <property type="entry name" value="OUTER-MEMBRANE LIPOPROTEIN CARRIER PROTEIN"/>
    <property type="match status" value="1"/>
</dbReference>
<dbReference type="PANTHER" id="PTHR35869:SF1">
    <property type="entry name" value="OUTER-MEMBRANE LIPOPROTEIN CARRIER PROTEIN"/>
    <property type="match status" value="1"/>
</dbReference>
<dbReference type="Pfam" id="PF03548">
    <property type="entry name" value="LolA"/>
    <property type="match status" value="1"/>
</dbReference>
<dbReference type="SUPFAM" id="SSF89392">
    <property type="entry name" value="Prokaryotic lipoproteins and lipoprotein localization factors"/>
    <property type="match status" value="1"/>
</dbReference>
<reference key="1">
    <citation type="submission" date="2009-07" db="EMBL/GenBank/DDBJ databases">
        <title>Complete sequence of Pectobacterium carotovorum subsp. carotovorum PC1.</title>
        <authorList>
            <consortium name="US DOE Joint Genome Institute"/>
            <person name="Lucas S."/>
            <person name="Copeland A."/>
            <person name="Lapidus A."/>
            <person name="Glavina del Rio T."/>
            <person name="Tice H."/>
            <person name="Bruce D."/>
            <person name="Goodwin L."/>
            <person name="Pitluck S."/>
            <person name="Munk A.C."/>
            <person name="Brettin T."/>
            <person name="Detter J.C."/>
            <person name="Han C."/>
            <person name="Tapia R."/>
            <person name="Larimer F."/>
            <person name="Land M."/>
            <person name="Hauser L."/>
            <person name="Kyrpides N."/>
            <person name="Mikhailova N."/>
            <person name="Balakrishnan V."/>
            <person name="Glasner J."/>
            <person name="Perna N.T."/>
        </authorList>
    </citation>
    <scope>NUCLEOTIDE SEQUENCE [LARGE SCALE GENOMIC DNA]</scope>
    <source>
        <strain>PC1</strain>
    </source>
</reference>
<organism>
    <name type="scientific">Pectobacterium carotovorum subsp. carotovorum (strain PC1)</name>
    <dbReference type="NCBI Taxonomy" id="561230"/>
    <lineage>
        <taxon>Bacteria</taxon>
        <taxon>Pseudomonadati</taxon>
        <taxon>Pseudomonadota</taxon>
        <taxon>Gammaproteobacteria</taxon>
        <taxon>Enterobacterales</taxon>
        <taxon>Pectobacteriaceae</taxon>
        <taxon>Pectobacterium</taxon>
    </lineage>
</organism>
<feature type="signal peptide" evidence="1">
    <location>
        <begin position="1"/>
        <end position="20"/>
    </location>
</feature>
<feature type="chain" id="PRO_5000486098" description="Outer-membrane lipoprotein carrier protein">
    <location>
        <begin position="21"/>
        <end position="203"/>
    </location>
</feature>
<comment type="function">
    <text evidence="1">Participates in the translocation of lipoproteins from the inner membrane to the outer membrane. Only forms a complex with a lipoprotein if the residue after the N-terminal Cys is not an aspartate (The Asp acts as a targeting signal to indicate that the lipoprotein should stay in the inner membrane).</text>
</comment>
<comment type="subunit">
    <text evidence="1">Monomer.</text>
</comment>
<comment type="subcellular location">
    <subcellularLocation>
        <location evidence="1">Periplasm</location>
    </subcellularLocation>
</comment>
<comment type="similarity">
    <text evidence="1">Belongs to the LolA family.</text>
</comment>
<keyword id="KW-0143">Chaperone</keyword>
<keyword id="KW-0574">Periplasm</keyword>
<keyword id="KW-0653">Protein transport</keyword>
<keyword id="KW-0732">Signal</keyword>
<keyword id="KW-0813">Transport</keyword>
<sequence length="203" mass="22554">MKKWLAISCLIAGMTSTAVYADAAKDLQGRLNKVNSFHANFSQKVTSADGAAVQEGEGELWLKRPNLFNWKTTSPDESTLISDGKTLWFYNPFVEQVTATWLKDATGNTPFILITRNDASDWNKYDVRQKGDDFELTPKSASGNLKQFAINVTTNGTIKQFTATEQDGQRSTYVLKNQQNAAVDAAQFTFTPPKGVTLDDQRQ</sequence>